<organism>
    <name type="scientific">Lactobacillus gasseri (strain ATCC 33323 / DSM 20243 / BCRC 14619 / CIP 102991 / JCM 1131 / KCTC 3163 / NCIMB 11718 / NCTC 13722 / AM63)</name>
    <dbReference type="NCBI Taxonomy" id="324831"/>
    <lineage>
        <taxon>Bacteria</taxon>
        <taxon>Bacillati</taxon>
        <taxon>Bacillota</taxon>
        <taxon>Bacilli</taxon>
        <taxon>Lactobacillales</taxon>
        <taxon>Lactobacillaceae</taxon>
        <taxon>Lactobacillus</taxon>
    </lineage>
</organism>
<gene>
    <name type="ordered locus">LGAS_0911</name>
</gene>
<name>Y911_LACGA</name>
<accession>Q043S2</accession>
<evidence type="ECO:0000255" key="1">
    <source>
        <dbReference type="HAMAP-Rule" id="MF_01538"/>
    </source>
</evidence>
<comment type="similarity">
    <text evidence="1">Belongs to the UPF0346 family.</text>
</comment>
<protein>
    <recommendedName>
        <fullName evidence="1">UPF0346 protein LGAS_0911</fullName>
    </recommendedName>
</protein>
<sequence>MAYRESFYRFLMTQRNPGSADDIAQFANNAQHDSSFPKQEEDYEKLSDYLELNAGYLPSMSVFDKAYQLYLDNMN</sequence>
<dbReference type="EMBL" id="CP000413">
    <property type="protein sequence ID" value="ABJ60300.1"/>
    <property type="molecule type" value="Genomic_DNA"/>
</dbReference>
<dbReference type="RefSeq" id="WP_003647379.1">
    <property type="nucleotide sequence ID" value="NZ_WBMG01000014.1"/>
</dbReference>
<dbReference type="SMR" id="Q043S2"/>
<dbReference type="GeneID" id="29639981"/>
<dbReference type="KEGG" id="lga:LGAS_0911"/>
<dbReference type="HOGENOM" id="CLU_177534_1_0_9"/>
<dbReference type="BioCyc" id="LGAS324831:G1G6Y-905-MONOMER"/>
<dbReference type="Proteomes" id="UP000000664">
    <property type="component" value="Chromosome"/>
</dbReference>
<dbReference type="Gene3D" id="1.10.150.260">
    <property type="entry name" value="YozE SAM-like"/>
    <property type="match status" value="1"/>
</dbReference>
<dbReference type="HAMAP" id="MF_01538">
    <property type="entry name" value="UPF0346"/>
    <property type="match status" value="1"/>
</dbReference>
<dbReference type="InterPro" id="IPR010673">
    <property type="entry name" value="UPF0346"/>
</dbReference>
<dbReference type="InterPro" id="IPR023089">
    <property type="entry name" value="YozE_SAM-like"/>
</dbReference>
<dbReference type="InterPro" id="IPR036806">
    <property type="entry name" value="YozE_SAM-like_sf"/>
</dbReference>
<dbReference type="NCBIfam" id="NF010193">
    <property type="entry name" value="PRK13672.1"/>
    <property type="match status" value="1"/>
</dbReference>
<dbReference type="Pfam" id="PF06855">
    <property type="entry name" value="YozE_SAM_like"/>
    <property type="match status" value="1"/>
</dbReference>
<dbReference type="PIRSF" id="PIRSF037262">
    <property type="entry name" value="UCP037262"/>
    <property type="match status" value="1"/>
</dbReference>
<dbReference type="SUPFAM" id="SSF140652">
    <property type="entry name" value="YozE-like"/>
    <property type="match status" value="1"/>
</dbReference>
<reference key="1">
    <citation type="journal article" date="2006" name="Proc. Natl. Acad. Sci. U.S.A.">
        <title>Comparative genomics of the lactic acid bacteria.</title>
        <authorList>
            <person name="Makarova K.S."/>
            <person name="Slesarev A."/>
            <person name="Wolf Y.I."/>
            <person name="Sorokin A."/>
            <person name="Mirkin B."/>
            <person name="Koonin E.V."/>
            <person name="Pavlov A."/>
            <person name="Pavlova N."/>
            <person name="Karamychev V."/>
            <person name="Polouchine N."/>
            <person name="Shakhova V."/>
            <person name="Grigoriev I."/>
            <person name="Lou Y."/>
            <person name="Rohksar D."/>
            <person name="Lucas S."/>
            <person name="Huang K."/>
            <person name="Goodstein D.M."/>
            <person name="Hawkins T."/>
            <person name="Plengvidhya V."/>
            <person name="Welker D."/>
            <person name="Hughes J."/>
            <person name="Goh Y."/>
            <person name="Benson A."/>
            <person name="Baldwin K."/>
            <person name="Lee J.-H."/>
            <person name="Diaz-Muniz I."/>
            <person name="Dosti B."/>
            <person name="Smeianov V."/>
            <person name="Wechter W."/>
            <person name="Barabote R."/>
            <person name="Lorca G."/>
            <person name="Altermann E."/>
            <person name="Barrangou R."/>
            <person name="Ganesan B."/>
            <person name="Xie Y."/>
            <person name="Rawsthorne H."/>
            <person name="Tamir D."/>
            <person name="Parker C."/>
            <person name="Breidt F."/>
            <person name="Broadbent J.R."/>
            <person name="Hutkins R."/>
            <person name="O'Sullivan D."/>
            <person name="Steele J."/>
            <person name="Unlu G."/>
            <person name="Saier M.H. Jr."/>
            <person name="Klaenhammer T."/>
            <person name="Richardson P."/>
            <person name="Kozyavkin S."/>
            <person name="Weimer B.C."/>
            <person name="Mills D.A."/>
        </authorList>
    </citation>
    <scope>NUCLEOTIDE SEQUENCE [LARGE SCALE GENOMIC DNA]</scope>
    <source>
        <strain>ATCC 33323 / DSM 20243 / BCRC 14619 / CIP 102991 / JCM 1131 / KCTC 3163 / NCIMB 11718 / NCTC 13722 / AM63</strain>
    </source>
</reference>
<proteinExistence type="inferred from homology"/>
<feature type="chain" id="PRO_0000298742" description="UPF0346 protein LGAS_0911">
    <location>
        <begin position="1"/>
        <end position="75"/>
    </location>
</feature>